<accession>Q6CQA6</accession>
<gene>
    <name type="ordered locus">KLLA0D18557g</name>
</gene>
<organism>
    <name type="scientific">Kluyveromyces lactis (strain ATCC 8585 / CBS 2359 / DSM 70799 / NBRC 1267 / NRRL Y-1140 / WM37)</name>
    <name type="common">Yeast</name>
    <name type="synonym">Candida sphaerica</name>
    <dbReference type="NCBI Taxonomy" id="284590"/>
    <lineage>
        <taxon>Eukaryota</taxon>
        <taxon>Fungi</taxon>
        <taxon>Dikarya</taxon>
        <taxon>Ascomycota</taxon>
        <taxon>Saccharomycotina</taxon>
        <taxon>Saccharomycetes</taxon>
        <taxon>Saccharomycetales</taxon>
        <taxon>Saccharomycetaceae</taxon>
        <taxon>Kluyveromyces</taxon>
    </lineage>
</organism>
<protein>
    <recommendedName>
        <fullName evidence="1">GPN-loop GTPase 3</fullName>
    </recommendedName>
</protein>
<keyword id="KW-0342">GTP-binding</keyword>
<keyword id="KW-0378">Hydrolase</keyword>
<keyword id="KW-0547">Nucleotide-binding</keyword>
<keyword id="KW-1185">Reference proteome</keyword>
<dbReference type="EMBL" id="CR382124">
    <property type="protein sequence ID" value="CAH00979.1"/>
    <property type="status" value="ALT_INIT"/>
    <property type="molecule type" value="Genomic_DNA"/>
</dbReference>
<dbReference type="RefSeq" id="XP_453883.1">
    <property type="nucleotide sequence ID" value="XM_453883.1"/>
</dbReference>
<dbReference type="SMR" id="Q6CQA6"/>
<dbReference type="FunCoup" id="Q6CQA6">
    <property type="interactions" value="937"/>
</dbReference>
<dbReference type="STRING" id="284590.Q6CQA6"/>
<dbReference type="PaxDb" id="284590-Q6CQA6"/>
<dbReference type="KEGG" id="kla:KLLA0_D18557g"/>
<dbReference type="eggNOG" id="KOG1534">
    <property type="taxonomic scope" value="Eukaryota"/>
</dbReference>
<dbReference type="HOGENOM" id="CLU_037460_0_0_1"/>
<dbReference type="InParanoid" id="Q6CQA6"/>
<dbReference type="Proteomes" id="UP000000598">
    <property type="component" value="Chromosome D"/>
</dbReference>
<dbReference type="GO" id="GO:0005525">
    <property type="term" value="F:GTP binding"/>
    <property type="evidence" value="ECO:0007669"/>
    <property type="project" value="UniProtKB-KW"/>
</dbReference>
<dbReference type="GO" id="GO:0003924">
    <property type="term" value="F:GTPase activity"/>
    <property type="evidence" value="ECO:0007669"/>
    <property type="project" value="TreeGrafter"/>
</dbReference>
<dbReference type="CDD" id="cd17872">
    <property type="entry name" value="GPN3"/>
    <property type="match status" value="1"/>
</dbReference>
<dbReference type="FunFam" id="3.40.50.300:FF:000552">
    <property type="entry name" value="GPN-loop GTPase 3"/>
    <property type="match status" value="1"/>
</dbReference>
<dbReference type="Gene3D" id="3.40.50.300">
    <property type="entry name" value="P-loop containing nucleotide triphosphate hydrolases"/>
    <property type="match status" value="1"/>
</dbReference>
<dbReference type="InterPro" id="IPR004130">
    <property type="entry name" value="Gpn"/>
</dbReference>
<dbReference type="InterPro" id="IPR030228">
    <property type="entry name" value="Gpn3"/>
</dbReference>
<dbReference type="InterPro" id="IPR027417">
    <property type="entry name" value="P-loop_NTPase"/>
</dbReference>
<dbReference type="PANTHER" id="PTHR21231:SF7">
    <property type="entry name" value="GPN-LOOP GTPASE 3"/>
    <property type="match status" value="1"/>
</dbReference>
<dbReference type="PANTHER" id="PTHR21231">
    <property type="entry name" value="XPA-BINDING PROTEIN 1-RELATED"/>
    <property type="match status" value="1"/>
</dbReference>
<dbReference type="Pfam" id="PF03029">
    <property type="entry name" value="ATP_bind_1"/>
    <property type="match status" value="1"/>
</dbReference>
<dbReference type="SUPFAM" id="SSF52540">
    <property type="entry name" value="P-loop containing nucleoside triphosphate hydrolases"/>
    <property type="match status" value="1"/>
</dbReference>
<name>GPN3_KLULA</name>
<evidence type="ECO:0000250" key="1">
    <source>
        <dbReference type="UniProtKB" id="Q06543"/>
    </source>
</evidence>
<evidence type="ECO:0000250" key="2">
    <source>
        <dbReference type="UniProtKB" id="Q9UYR9"/>
    </source>
</evidence>
<evidence type="ECO:0000305" key="3"/>
<comment type="function">
    <text evidence="1">Small GTPase required for proper nuclear import of RNA polymerase II and III (RNAPII and RNAPIII). May act at an RNAP assembly step prior to nuclear import.</text>
</comment>
<comment type="subunit">
    <text evidence="1">Heterodimers with GPN1 or GPN2. Binds to RNA polymerase II (RNAPII).</text>
</comment>
<comment type="similarity">
    <text evidence="3">Belongs to the GPN-loop GTPase family.</text>
</comment>
<comment type="sequence caution" evidence="3">
    <conflict type="erroneous initiation">
        <sequence resource="EMBL-CDS" id="CAH00979"/>
    </conflict>
</comment>
<feature type="chain" id="PRO_0000255593" description="GPN-loop GTPase 3">
    <location>
        <begin position="1"/>
        <end position="271"/>
    </location>
</feature>
<feature type="short sequence motif" description="Gly-Pro-Asn (GPN)-loop; involved in dimer interface" evidence="2">
    <location>
        <begin position="70"/>
        <end position="72"/>
    </location>
</feature>
<feature type="binding site" evidence="2">
    <location>
        <begin position="13"/>
        <end position="18"/>
    </location>
    <ligand>
        <name>GTP</name>
        <dbReference type="ChEBI" id="CHEBI:37565"/>
    </ligand>
</feature>
<feature type="binding site" evidence="2">
    <location>
        <begin position="173"/>
        <end position="176"/>
    </location>
    <ligand>
        <name>GTP</name>
        <dbReference type="ChEBI" id="CHEBI:37565"/>
    </ligand>
</feature>
<feature type="site" description="Stabilizes the phosphate intermediate; shared with dimeric partner" evidence="2">
    <location>
        <position position="72"/>
    </location>
</feature>
<proteinExistence type="inferred from homology"/>
<sequence>MSRVGVLVLGPAGAGKSTFCNAIISHMQSIGRRAHIVNLDPAAEATKYEFTIDIRDLISLEDVMEEFGLGPNGSLIYCFEYLLNNLDWLDEEIGDYNDEYLIFDCPGQIELYTHIPVLPTIVRHLQNQLNFNLCATYLLEAPFVIDTSKFFSGALSAMSAMILLELPHINILSKLDLVKDSHNKKALKKFLNPDPLLLTDKVNEETNPKFHKLNEAIANLVDDFGMVQFLPLEAKNPESVSTILSYIDDVTQWAEAQEPKEPNDQIEIDDM</sequence>
<reference key="1">
    <citation type="journal article" date="2004" name="Nature">
        <title>Genome evolution in yeasts.</title>
        <authorList>
            <person name="Dujon B."/>
            <person name="Sherman D."/>
            <person name="Fischer G."/>
            <person name="Durrens P."/>
            <person name="Casaregola S."/>
            <person name="Lafontaine I."/>
            <person name="de Montigny J."/>
            <person name="Marck C."/>
            <person name="Neuveglise C."/>
            <person name="Talla E."/>
            <person name="Goffard N."/>
            <person name="Frangeul L."/>
            <person name="Aigle M."/>
            <person name="Anthouard V."/>
            <person name="Babour A."/>
            <person name="Barbe V."/>
            <person name="Barnay S."/>
            <person name="Blanchin S."/>
            <person name="Beckerich J.-M."/>
            <person name="Beyne E."/>
            <person name="Bleykasten C."/>
            <person name="Boisrame A."/>
            <person name="Boyer J."/>
            <person name="Cattolico L."/>
            <person name="Confanioleri F."/>
            <person name="de Daruvar A."/>
            <person name="Despons L."/>
            <person name="Fabre E."/>
            <person name="Fairhead C."/>
            <person name="Ferry-Dumazet H."/>
            <person name="Groppi A."/>
            <person name="Hantraye F."/>
            <person name="Hennequin C."/>
            <person name="Jauniaux N."/>
            <person name="Joyet P."/>
            <person name="Kachouri R."/>
            <person name="Kerrest A."/>
            <person name="Koszul R."/>
            <person name="Lemaire M."/>
            <person name="Lesur I."/>
            <person name="Ma L."/>
            <person name="Muller H."/>
            <person name="Nicaud J.-M."/>
            <person name="Nikolski M."/>
            <person name="Oztas S."/>
            <person name="Ozier-Kalogeropoulos O."/>
            <person name="Pellenz S."/>
            <person name="Potier S."/>
            <person name="Richard G.-F."/>
            <person name="Straub M.-L."/>
            <person name="Suleau A."/>
            <person name="Swennen D."/>
            <person name="Tekaia F."/>
            <person name="Wesolowski-Louvel M."/>
            <person name="Westhof E."/>
            <person name="Wirth B."/>
            <person name="Zeniou-Meyer M."/>
            <person name="Zivanovic Y."/>
            <person name="Bolotin-Fukuhara M."/>
            <person name="Thierry A."/>
            <person name="Bouchier C."/>
            <person name="Caudron B."/>
            <person name="Scarpelli C."/>
            <person name="Gaillardin C."/>
            <person name="Weissenbach J."/>
            <person name="Wincker P."/>
            <person name="Souciet J.-L."/>
        </authorList>
    </citation>
    <scope>NUCLEOTIDE SEQUENCE [LARGE SCALE GENOMIC DNA]</scope>
    <source>
        <strain>ATCC 8585 / CBS 2359 / DSM 70799 / NBRC 1267 / NRRL Y-1140 / WM37</strain>
    </source>
</reference>